<name>ANMK_NEIMB</name>
<evidence type="ECO:0000255" key="1">
    <source>
        <dbReference type="HAMAP-Rule" id="MF_01270"/>
    </source>
</evidence>
<evidence type="ECO:0000305" key="2"/>
<feature type="chain" id="PRO_0000250015" description="Anhydro-N-acetylmuramic acid kinase">
    <location>
        <begin position="1"/>
        <end position="367"/>
    </location>
</feature>
<feature type="binding site" evidence="1">
    <location>
        <begin position="13"/>
        <end position="20"/>
    </location>
    <ligand>
        <name>ATP</name>
        <dbReference type="ChEBI" id="CHEBI:30616"/>
    </ligand>
</feature>
<sequence length="367" mass="39986">MMETQLYIGIMSGTSMDGADAVLIRMDGGKWLGAEGHAFTPYPGRLRRQLLDLQDTGADELHRSRILSQELSRLYAQTAAELLCSQNLAPSDITALGCHGQTVRHAPEHGYSIQLADLPLLAERTRIFTVGDFRSRDLAAGGQGAPLVPAFHEALFRDNRETRAVLNIGGIANISVLPPDAPAFGFDTGPGNMLMDAWTQAHWQLPYDKNGAKAAQGNILPQLLDRLLAHPYFAQPHPKSTGRELFALNWLETYLDGGENRYDVLRTLSRFTAQTVCDAVSHAAADARQMYICGGGIRNPVLMADLAECFGTRVSLHSTADLNLDPQWVEAAAFAWLAACWINRIPGSPHKATGASKPCILGAGYYY</sequence>
<organism>
    <name type="scientific">Neisseria meningitidis serogroup B (strain ATCC BAA-335 / MC58)</name>
    <dbReference type="NCBI Taxonomy" id="122586"/>
    <lineage>
        <taxon>Bacteria</taxon>
        <taxon>Pseudomonadati</taxon>
        <taxon>Pseudomonadota</taxon>
        <taxon>Betaproteobacteria</taxon>
        <taxon>Neisseriales</taxon>
        <taxon>Neisseriaceae</taxon>
        <taxon>Neisseria</taxon>
    </lineage>
</organism>
<keyword id="KW-0067">ATP-binding</keyword>
<keyword id="KW-0119">Carbohydrate metabolism</keyword>
<keyword id="KW-0418">Kinase</keyword>
<keyword id="KW-0547">Nucleotide-binding</keyword>
<keyword id="KW-1185">Reference proteome</keyword>
<keyword id="KW-0808">Transferase</keyword>
<gene>
    <name evidence="1" type="primary">anmK</name>
    <name type="ordered locus">NMB0377</name>
</gene>
<accession>Q9K118</accession>
<reference key="1">
    <citation type="journal article" date="2000" name="Science">
        <title>Complete genome sequence of Neisseria meningitidis serogroup B strain MC58.</title>
        <authorList>
            <person name="Tettelin H."/>
            <person name="Saunders N.J."/>
            <person name="Heidelberg J.F."/>
            <person name="Jeffries A.C."/>
            <person name="Nelson K.E."/>
            <person name="Eisen J.A."/>
            <person name="Ketchum K.A."/>
            <person name="Hood D.W."/>
            <person name="Peden J.F."/>
            <person name="Dodson R.J."/>
            <person name="Nelson W.C."/>
            <person name="Gwinn M.L."/>
            <person name="DeBoy R.T."/>
            <person name="Peterson J.D."/>
            <person name="Hickey E.K."/>
            <person name="Haft D.H."/>
            <person name="Salzberg S.L."/>
            <person name="White O."/>
            <person name="Fleischmann R.D."/>
            <person name="Dougherty B.A."/>
            <person name="Mason T.M."/>
            <person name="Ciecko A."/>
            <person name="Parksey D.S."/>
            <person name="Blair E."/>
            <person name="Cittone H."/>
            <person name="Clark E.B."/>
            <person name="Cotton M.D."/>
            <person name="Utterback T.R."/>
            <person name="Khouri H.M."/>
            <person name="Qin H."/>
            <person name="Vamathevan J.J."/>
            <person name="Gill J."/>
            <person name="Scarlato V."/>
            <person name="Masignani V."/>
            <person name="Pizza M."/>
            <person name="Grandi G."/>
            <person name="Sun L."/>
            <person name="Smith H.O."/>
            <person name="Fraser C.M."/>
            <person name="Moxon E.R."/>
            <person name="Rappuoli R."/>
            <person name="Venter J.C."/>
        </authorList>
    </citation>
    <scope>NUCLEOTIDE SEQUENCE [LARGE SCALE GENOMIC DNA]</scope>
    <source>
        <strain>ATCC BAA-335 / MC58</strain>
    </source>
</reference>
<proteinExistence type="inferred from homology"/>
<protein>
    <recommendedName>
        <fullName evidence="1">Anhydro-N-acetylmuramic acid kinase</fullName>
        <ecNumber evidence="1">2.7.1.170</ecNumber>
    </recommendedName>
    <alternativeName>
        <fullName evidence="1">AnhMurNAc kinase</fullName>
    </alternativeName>
</protein>
<dbReference type="EC" id="2.7.1.170" evidence="1"/>
<dbReference type="EMBL" id="AE002098">
    <property type="protein sequence ID" value="AAF40817.1"/>
    <property type="status" value="ALT_INIT"/>
    <property type="molecule type" value="Genomic_DNA"/>
</dbReference>
<dbReference type="PIR" id="E81207">
    <property type="entry name" value="E81207"/>
</dbReference>
<dbReference type="RefSeq" id="NP_273426.1">
    <property type="nucleotide sequence ID" value="NC_003112.2"/>
</dbReference>
<dbReference type="SMR" id="Q9K118"/>
<dbReference type="FunCoup" id="Q9K118">
    <property type="interactions" value="41"/>
</dbReference>
<dbReference type="STRING" id="122586.NMB0377"/>
<dbReference type="PaxDb" id="122586-NMB0377"/>
<dbReference type="KEGG" id="nme:NMB0377"/>
<dbReference type="PATRIC" id="fig|122586.8.peg.474"/>
<dbReference type="HOGENOM" id="CLU_038782_0_0_4"/>
<dbReference type="InParanoid" id="Q9K118"/>
<dbReference type="OrthoDB" id="9763949at2"/>
<dbReference type="UniPathway" id="UPA00343"/>
<dbReference type="UniPathway" id="UPA00544"/>
<dbReference type="Proteomes" id="UP000000425">
    <property type="component" value="Chromosome"/>
</dbReference>
<dbReference type="GO" id="GO:0005524">
    <property type="term" value="F:ATP binding"/>
    <property type="evidence" value="ECO:0007669"/>
    <property type="project" value="UniProtKB-UniRule"/>
</dbReference>
<dbReference type="GO" id="GO:0016301">
    <property type="term" value="F:kinase activity"/>
    <property type="evidence" value="ECO:0000318"/>
    <property type="project" value="GO_Central"/>
</dbReference>
<dbReference type="GO" id="GO:0016773">
    <property type="term" value="F:phosphotransferase activity, alcohol group as acceptor"/>
    <property type="evidence" value="ECO:0007669"/>
    <property type="project" value="UniProtKB-UniRule"/>
</dbReference>
<dbReference type="GO" id="GO:0097175">
    <property type="term" value="P:1,6-anhydro-N-acetyl-beta-muramic acid catabolic process"/>
    <property type="evidence" value="ECO:0007669"/>
    <property type="project" value="UniProtKB-UniRule"/>
</dbReference>
<dbReference type="GO" id="GO:0006040">
    <property type="term" value="P:amino sugar metabolic process"/>
    <property type="evidence" value="ECO:0007669"/>
    <property type="project" value="InterPro"/>
</dbReference>
<dbReference type="GO" id="GO:0009254">
    <property type="term" value="P:peptidoglycan turnover"/>
    <property type="evidence" value="ECO:0007669"/>
    <property type="project" value="UniProtKB-UniRule"/>
</dbReference>
<dbReference type="CDD" id="cd24050">
    <property type="entry name" value="ASKHA_NBD_ANMK"/>
    <property type="match status" value="1"/>
</dbReference>
<dbReference type="Gene3D" id="3.30.420.40">
    <property type="match status" value="2"/>
</dbReference>
<dbReference type="HAMAP" id="MF_01270">
    <property type="entry name" value="AnhMurNAc_kinase"/>
    <property type="match status" value="1"/>
</dbReference>
<dbReference type="InterPro" id="IPR005338">
    <property type="entry name" value="Anhydro_N_Ac-Mur_kinase"/>
</dbReference>
<dbReference type="InterPro" id="IPR043129">
    <property type="entry name" value="ATPase_NBD"/>
</dbReference>
<dbReference type="NCBIfam" id="NF007139">
    <property type="entry name" value="PRK09585.1-3"/>
    <property type="match status" value="1"/>
</dbReference>
<dbReference type="PANTHER" id="PTHR30605">
    <property type="entry name" value="ANHYDRO-N-ACETYLMURAMIC ACID KINASE"/>
    <property type="match status" value="1"/>
</dbReference>
<dbReference type="PANTHER" id="PTHR30605:SF0">
    <property type="entry name" value="ANHYDRO-N-ACETYLMURAMIC ACID KINASE"/>
    <property type="match status" value="1"/>
</dbReference>
<dbReference type="Pfam" id="PF03702">
    <property type="entry name" value="AnmK"/>
    <property type="match status" value="1"/>
</dbReference>
<dbReference type="SUPFAM" id="SSF53067">
    <property type="entry name" value="Actin-like ATPase domain"/>
    <property type="match status" value="1"/>
</dbReference>
<comment type="function">
    <text evidence="1">Catalyzes the specific phosphorylation of 1,6-anhydro-N-acetylmuramic acid (anhMurNAc) with the simultaneous cleavage of the 1,6-anhydro ring, generating MurNAc-6-P. Is required for the utilization of anhMurNAc either imported from the medium or derived from its own cell wall murein, and thus plays a role in cell wall recycling.</text>
</comment>
<comment type="catalytic activity">
    <reaction evidence="1">
        <text>1,6-anhydro-N-acetyl-beta-muramate + ATP + H2O = N-acetyl-D-muramate 6-phosphate + ADP + H(+)</text>
        <dbReference type="Rhea" id="RHEA:24952"/>
        <dbReference type="ChEBI" id="CHEBI:15377"/>
        <dbReference type="ChEBI" id="CHEBI:15378"/>
        <dbReference type="ChEBI" id="CHEBI:30616"/>
        <dbReference type="ChEBI" id="CHEBI:58690"/>
        <dbReference type="ChEBI" id="CHEBI:58722"/>
        <dbReference type="ChEBI" id="CHEBI:456216"/>
        <dbReference type="EC" id="2.7.1.170"/>
    </reaction>
</comment>
<comment type="pathway">
    <text evidence="1">Amino-sugar metabolism; 1,6-anhydro-N-acetylmuramate degradation.</text>
</comment>
<comment type="pathway">
    <text evidence="1">Cell wall biogenesis; peptidoglycan recycling.</text>
</comment>
<comment type="similarity">
    <text evidence="1">Belongs to the anhydro-N-acetylmuramic acid kinase family.</text>
</comment>
<comment type="sequence caution" evidence="2">
    <conflict type="erroneous initiation">
        <sequence resource="EMBL-CDS" id="AAF40817"/>
    </conflict>
</comment>